<reference key="1">
    <citation type="journal article" date="2004" name="Genome Res.">
        <title>The status, quality, and expansion of the NIH full-length cDNA project: the Mammalian Gene Collection (MGC).</title>
        <authorList>
            <consortium name="The MGC Project Team"/>
        </authorList>
    </citation>
    <scope>NUCLEOTIDE SEQUENCE [LARGE SCALE MRNA]</scope>
    <source>
        <strain>C57BL/6J</strain>
        <strain>FVB/N</strain>
        <tissue>Brain</tissue>
        <tissue>Kidney</tissue>
    </source>
</reference>
<reference key="2">
    <citation type="journal article" date="2013" name="J. Biol. Chem.">
        <title>Versican processing by a disintegrin-like and metalloproteinase domain with thrombospondin-1 repeats proteinases-5 and -15 facilitates myoblast fusion.</title>
        <authorList>
            <person name="Stupka N."/>
            <person name="Kintakas C."/>
            <person name="White J.D."/>
            <person name="Fraser F.W."/>
            <person name="Hanciu M."/>
            <person name="Aramaki-Hattori N."/>
            <person name="Martin S."/>
            <person name="Coles C."/>
            <person name="Collier F."/>
            <person name="Ward A.C."/>
            <person name="Apte S.S."/>
            <person name="McCulloch D.R."/>
        </authorList>
    </citation>
    <scope>FUNCTION</scope>
    <scope>DEVELOPMENTAL STAGE</scope>
</reference>
<reference key="3">
    <citation type="journal article" date="2013" name="J. Biol. Chem.">
        <title>Biosynthesis and expression of a disintegrin-like and metalloproteinase domain with thrombospondin-1 repeats-15: a novel versican-cleaving proteoglycanase.</title>
        <authorList>
            <person name="Dancevic C.M."/>
            <person name="Fraser F.W."/>
            <person name="Smith A.D."/>
            <person name="Stupka N."/>
            <person name="Ward A.C."/>
            <person name="McCulloch D.R."/>
        </authorList>
    </citation>
    <scope>FUNCTION</scope>
    <scope>SUBCELLULAR LOCATION</scope>
    <scope>TISSUE SPECIFICITY</scope>
    <scope>DEVELOPMENTAL STAGE</scope>
    <scope>PROTEOLYTIC CLEAVAGE</scope>
    <scope>GLYCOSYLATION AT ASN-141</scope>
    <scope>MUTAGENESIS OF ASN-141 AND ARG-212</scope>
</reference>
<reference key="4">
    <citation type="journal article" date="2022" name="Genet. Med.">
        <title>Biallelic variants in ADAMTS15 cause a novel form of distal arthrogryposis.</title>
        <authorList>
            <person name="Boschann F."/>
            <person name="Cogulu M.O."/>
            <person name="Pehlivan D."/>
            <person name="Balachandran S."/>
            <person name="Vallecillo-Garcia P."/>
            <person name="Grochowski C.M."/>
            <person name="Hansmeier N.R."/>
            <person name="Coban Akdemir Z.H."/>
            <person name="Prada-Medina C.A."/>
            <person name="Aykut A."/>
            <person name="Fischer-Zirnsak B."/>
            <person name="Badura S."/>
            <person name="Durmaz B."/>
            <person name="Ozkinay F."/>
            <person name="Haegerling R."/>
            <person name="Posey J.E."/>
            <person name="Stricker S."/>
            <person name="Gillessen-Kaesbach G."/>
            <person name="Spielmann M."/>
            <person name="Horn D."/>
            <person name="Brockmann K."/>
            <person name="Lupski J.R."/>
            <person name="Kornak U."/>
            <person name="Schmidt J."/>
        </authorList>
    </citation>
    <scope>TISSUE SPECIFICITY</scope>
    <scope>DEVELOPMENTAL STAGE</scope>
</reference>
<reference key="5">
    <citation type="journal article" date="2023" name="Genet. Med.">
        <authorList>
            <person name="Boschann F."/>
            <person name="Cogulu O."/>
            <person name="Pehlivan D."/>
            <person name="Balachandran S."/>
            <person name="Vallecillo-Garcia P."/>
            <person name="Grochowski C.M."/>
            <person name="Hansmeier N.R."/>
            <person name="Coban Akdemir Z.H."/>
            <person name="Prada-Medina C.A."/>
            <person name="Aykut A."/>
            <person name="Fischer-Zirnsak B."/>
            <person name="Badura S."/>
            <person name="Durmaz B."/>
            <person name="Ozkinay F."/>
            <person name="Haegerling R."/>
            <person name="Posey J.E."/>
            <person name="Stricker S."/>
            <person name="Gillessen-Kaesbach G."/>
            <person name="Spielmann M."/>
            <person name="Horn D."/>
            <person name="Brockmann K."/>
            <person name="Lupski J.R."/>
            <person name="Kornak U."/>
            <person name="Schmidt J."/>
        </authorList>
    </citation>
    <scope>ERRATUM OF PUBMED:35962790</scope>
</reference>
<gene>
    <name type="primary">Adamts15</name>
</gene>
<proteinExistence type="evidence at protein level"/>
<keyword id="KW-0165">Cleavage on pair of basic residues</keyword>
<keyword id="KW-1015">Disulfide bond</keyword>
<keyword id="KW-0272">Extracellular matrix</keyword>
<keyword id="KW-0325">Glycoprotein</keyword>
<keyword id="KW-0378">Hydrolase</keyword>
<keyword id="KW-0479">Metal-binding</keyword>
<keyword id="KW-0482">Metalloprotease</keyword>
<keyword id="KW-0645">Protease</keyword>
<keyword id="KW-1185">Reference proteome</keyword>
<keyword id="KW-0677">Repeat</keyword>
<keyword id="KW-0964">Secreted</keyword>
<keyword id="KW-0732">Signal</keyword>
<keyword id="KW-0862">Zinc</keyword>
<keyword id="KW-0865">Zymogen</keyword>
<organism>
    <name type="scientific">Mus musculus</name>
    <name type="common">Mouse</name>
    <dbReference type="NCBI Taxonomy" id="10090"/>
    <lineage>
        <taxon>Eukaryota</taxon>
        <taxon>Metazoa</taxon>
        <taxon>Chordata</taxon>
        <taxon>Craniata</taxon>
        <taxon>Vertebrata</taxon>
        <taxon>Euteleostomi</taxon>
        <taxon>Mammalia</taxon>
        <taxon>Eutheria</taxon>
        <taxon>Euarchontoglires</taxon>
        <taxon>Glires</taxon>
        <taxon>Rodentia</taxon>
        <taxon>Myomorpha</taxon>
        <taxon>Muroidea</taxon>
        <taxon>Muridae</taxon>
        <taxon>Murinae</taxon>
        <taxon>Mus</taxon>
        <taxon>Mus</taxon>
    </lineage>
</organism>
<protein>
    <recommendedName>
        <fullName>A disintegrin and metalloproteinase with thrombospondin motifs 15</fullName>
        <shortName>ADAM-TS 15</shortName>
        <shortName>ADAM-TS15</shortName>
        <shortName>ADAMTS-15</shortName>
        <ecNumber>3.4.24.-</ecNumber>
    </recommendedName>
</protein>
<accession>P59384</accession>
<accession>Q504Z2</accession>
<accession>Q91Z56</accession>
<evidence type="ECO:0000250" key="1"/>
<evidence type="ECO:0000250" key="2">
    <source>
        <dbReference type="UniProtKB" id="Q76LX8"/>
    </source>
</evidence>
<evidence type="ECO:0000250" key="3">
    <source>
        <dbReference type="UniProtKB" id="Q9UNA0"/>
    </source>
</evidence>
<evidence type="ECO:0000255" key="4"/>
<evidence type="ECO:0000255" key="5">
    <source>
        <dbReference type="PROSITE-ProRule" id="PRU00210"/>
    </source>
</evidence>
<evidence type="ECO:0000255" key="6">
    <source>
        <dbReference type="PROSITE-ProRule" id="PRU00276"/>
    </source>
</evidence>
<evidence type="ECO:0000255" key="7">
    <source>
        <dbReference type="PROSITE-ProRule" id="PRU10095"/>
    </source>
</evidence>
<evidence type="ECO:0000256" key="8">
    <source>
        <dbReference type="SAM" id="MobiDB-lite"/>
    </source>
</evidence>
<evidence type="ECO:0000269" key="9">
    <source>
    </source>
</evidence>
<evidence type="ECO:0000269" key="10">
    <source>
    </source>
</evidence>
<evidence type="ECO:0000269" key="11">
    <source>
    </source>
</evidence>
<evidence type="ECO:0000305" key="12"/>
<feature type="signal peptide" evidence="4">
    <location>
        <begin position="1"/>
        <end position="18"/>
    </location>
</feature>
<feature type="propeptide" id="PRO_0000270787" evidence="10">
    <location>
        <begin position="19"/>
        <end position="212"/>
    </location>
</feature>
<feature type="chain" id="PRO_0000078212" description="A disintegrin and metalloproteinase with thrombospondin motifs 15">
    <location>
        <begin position="213"/>
        <end position="950"/>
    </location>
</feature>
<feature type="domain" description="Peptidase M12B" evidence="6">
    <location>
        <begin position="218"/>
        <end position="427"/>
    </location>
</feature>
<feature type="domain" description="Disintegrin">
    <location>
        <begin position="428"/>
        <end position="515"/>
    </location>
</feature>
<feature type="domain" description="TSP type-1 1" evidence="5">
    <location>
        <begin position="516"/>
        <end position="571"/>
    </location>
</feature>
<feature type="domain" description="TSP type-1 2" evidence="5">
    <location>
        <begin position="839"/>
        <end position="895"/>
    </location>
</feature>
<feature type="domain" description="TSP type-1 3" evidence="5">
    <location>
        <begin position="896"/>
        <end position="949"/>
    </location>
</feature>
<feature type="region of interest" description="Disordered" evidence="8">
    <location>
        <begin position="144"/>
        <end position="172"/>
    </location>
</feature>
<feature type="region of interest" description="Spacer" evidence="1">
    <location>
        <begin position="701"/>
        <end position="838"/>
    </location>
</feature>
<feature type="region of interest" description="Disordered" evidence="8">
    <location>
        <begin position="798"/>
        <end position="822"/>
    </location>
</feature>
<feature type="short sequence motif" description="Cysteine switch" evidence="1">
    <location>
        <begin position="172"/>
        <end position="179"/>
    </location>
</feature>
<feature type="compositionally biased region" description="Basic and acidic residues" evidence="8">
    <location>
        <begin position="802"/>
        <end position="816"/>
    </location>
</feature>
<feature type="active site" evidence="6 7">
    <location>
        <position position="362"/>
    </location>
</feature>
<feature type="binding site" description="in inhibited form" evidence="1">
    <location>
        <position position="174"/>
    </location>
    <ligand>
        <name>Zn(2+)</name>
        <dbReference type="ChEBI" id="CHEBI:29105"/>
        <note>catalytic</note>
    </ligand>
</feature>
<feature type="binding site" evidence="3">
    <location>
        <position position="361"/>
    </location>
    <ligand>
        <name>Zn(2+)</name>
        <dbReference type="ChEBI" id="CHEBI:29105"/>
        <note>catalytic</note>
    </ligand>
</feature>
<feature type="binding site" evidence="3">
    <location>
        <position position="365"/>
    </location>
    <ligand>
        <name>Zn(2+)</name>
        <dbReference type="ChEBI" id="CHEBI:29105"/>
        <note>catalytic</note>
    </ligand>
</feature>
<feature type="binding site" evidence="3">
    <location>
        <position position="371"/>
    </location>
    <ligand>
        <name>Zn(2+)</name>
        <dbReference type="ChEBI" id="CHEBI:29105"/>
        <note>catalytic</note>
    </ligand>
</feature>
<feature type="site" description="Cleavage; by furin" evidence="10">
    <location>
        <begin position="212"/>
        <end position="213"/>
    </location>
</feature>
<feature type="glycosylation site" description="N-linked (GlcNAc...) asparagine" evidence="10">
    <location>
        <position position="141"/>
    </location>
</feature>
<feature type="glycosylation site" description="N-linked (GlcNAc...) asparagine" evidence="4">
    <location>
        <position position="591"/>
    </location>
</feature>
<feature type="glycosylation site" description="N-linked (GlcNAc...) asparagine" evidence="4">
    <location>
        <position position="623"/>
    </location>
</feature>
<feature type="glycosylation site" description="N-linked (GlcNAc...) asparagine" evidence="4">
    <location>
        <position position="679"/>
    </location>
</feature>
<feature type="disulfide bond" evidence="3">
    <location>
        <begin position="293"/>
        <end position="345"/>
    </location>
</feature>
<feature type="disulfide bond" evidence="3">
    <location>
        <begin position="322"/>
        <end position="327"/>
    </location>
</feature>
<feature type="disulfide bond" evidence="3">
    <location>
        <begin position="339"/>
        <end position="422"/>
    </location>
</feature>
<feature type="disulfide bond" evidence="3">
    <location>
        <begin position="377"/>
        <end position="406"/>
    </location>
</feature>
<feature type="disulfide bond" evidence="3">
    <location>
        <begin position="448"/>
        <end position="470"/>
    </location>
</feature>
<feature type="disulfide bond" evidence="3">
    <location>
        <begin position="459"/>
        <end position="480"/>
    </location>
</feature>
<feature type="disulfide bond" evidence="3">
    <location>
        <begin position="465"/>
        <end position="499"/>
    </location>
</feature>
<feature type="disulfide bond" evidence="3">
    <location>
        <begin position="493"/>
        <end position="504"/>
    </location>
</feature>
<feature type="disulfide bond" evidence="5">
    <location>
        <begin position="528"/>
        <end position="565"/>
    </location>
</feature>
<feature type="disulfide bond" evidence="5">
    <location>
        <begin position="532"/>
        <end position="570"/>
    </location>
</feature>
<feature type="disulfide bond" evidence="5">
    <location>
        <begin position="543"/>
        <end position="555"/>
    </location>
</feature>
<feature type="mutagenesis site" description="Reduced glycosylation." evidence="10">
    <original>N</original>
    <variation>Q</variation>
    <location>
        <position position="141"/>
    </location>
</feature>
<feature type="mutagenesis site" description="Reduced propeptide cleavage." evidence="10">
    <original>R</original>
    <variation>A</variation>
    <location>
        <position position="212"/>
    </location>
</feature>
<feature type="sequence conflict" description="In Ref. 1; AAH43308." evidence="12" ref="1">
    <original>MMSPTLIQ</original>
    <variation>AIPAGASS</variation>
    <location>
        <begin position="389"/>
        <end position="396"/>
    </location>
</feature>
<feature type="sequence conflict" description="In Ref. 1; AAH09667." evidence="12" ref="1">
    <original>SPRD</original>
    <variation>PRVR</variation>
    <location>
        <begin position="611"/>
        <end position="614"/>
    </location>
</feature>
<feature type="sequence conflict" description="In Ref. 1; AAH09667." evidence="12" ref="1">
    <original>P</original>
    <variation>L</variation>
    <location>
        <position position="819"/>
    </location>
</feature>
<sequence length="950" mass="103938">MLLLGISILALAWRPAGSSEPEWEVVVPIRRDPDINGRHYYRRGTEDSGDQGLIFQITAFQQDFYLHLTPDAQFLAPAFATEYLGVPLQRLTGSSLDLRRCFYSGYVNAEPDSFAAVSLCGGLRGAFGYRGAEYVISPLPNTSAPEAQRHSQGAHLLQRRGAPVGPSGDPTSRCGVASGWNPAILRALDPYKPRRTGAGESHNRRRSGRAKRFVSIPRYVETLVVADESMVKFHGADLEHYLLTLLATAARLYRHPSILNPINIVVVKVLLLGDRDTGPKVTGNAALTLRNFCAWQKKLNKVSDKHPEYWDTAILFTRQDLCGATTCDTLGMADVGTMCDPKRSCSVIEDDGLPSAFTTAHELGHVFNMPHDNVKVCEEVFGKLRANHMMSPTLIQIDRANPWSACSAAIITDFLDSGHGDCLLDQPSKPITLPEDLPGTSYSLSQQCELAFGVGSKPCPYMQYCTKLWCTGKAKGQMVCQTRHFPWADGTSCGEGKFCLKGACVERHNPNKYRVDGSWAKWEPYGSCSRTCGGGVQLARRQCSNPTPANGGKYCEGVRVKYRSCNLEPCPSSASGKSFREEQCEAFNGYNHSTNRLTLAVAWVPKYSGVSPRDKCKLICRANGTGYFYVLAPKVVDGTLCTPDSTSVCVQGKCIKAGCDGNLGSKKKFDKCGVCGGDNKSCKRVTGLFTKPMHGYNFVVAIPAGASSIDIRQRGYKGLIGDDNYLALKNSQGKYLLNGHFVVSAVERDLVVKGSVLRYSGTGTAVESLQASRPILEPLTVEVLSVGKMTPPRVRYSFYLPKEPREDKSTRPKDPRGSPVLRNSVLSLSNQVEQPDNRPPARWVAGSWGPCSVSCGSGLQKRAVDCRDSPGQQGASACDVDHRPLEKRACGEPCPTWELGNWSPCSKSCGRGFKRRPLKCVGHGGRLLARDQCDLRRKPQELDFCVLRPC</sequence>
<comment type="function">
    <text evidence="9 10">Metalloprotease which has proteolytic activity against the proteoglycan VCAN, cleaving it at the 'Glu-1401-|-1402-Ala' site (PubMed:24220035). Cleaves VCAN in the pericellular matrix surrounding myoblasts, facilitating myoblast contact and fusion which is required for skeletal muscle development and regeneration (PubMed:23233679).</text>
</comment>
<comment type="cofactor">
    <cofactor evidence="3">
        <name>Zn(2+)</name>
        <dbReference type="ChEBI" id="CHEBI:29105"/>
    </cofactor>
    <text evidence="3">Binds 1 zinc ion per subunit.</text>
</comment>
<comment type="subcellular location">
    <subcellularLocation>
        <location evidence="10">Secreted</location>
        <location evidence="10">Extracellular space</location>
        <location evidence="10">Extracellular matrix</location>
    </subcellularLocation>
    <subcellularLocation>
        <location evidence="10">Cell surface</location>
    </subcellularLocation>
</comment>
<comment type="tissue specificity">
    <text evidence="10 11">In the adult colon, highly expressed in the muscularis externa (inner circular smooth muscle and outer longitudinal smooth muscle), muscularis mucosa, submucosal glands, crypt, villi epithelial cells, goblet cells and lamina propria (PubMed:24220035). Expressed at perimuscular and peritendious areas in the developing limbs (PubMed:35962790).</text>
</comment>
<comment type="developmental stage">
    <text evidence="9 10 11">At 10.5 dpc, strongly and specifically expressed in the developing heart tubes (PubMed:24220035). By 13.5 dpc, widely expressed including in the perichondrium in the developing autopod, brain, ear, whisker follicles, vertebral column and epidermis (PubMed:24220035). Also localizes to the myocardium of the developing right atrium, the bulbous cordis and the airway epithelia of the main bronchiole in the lung bud at 11.5 dpc, the vertebral column and dorsal root ganglia at 14.5 dpc, and the developing hind limb at 15.5 dpc (PubMed:24220035). In embryonic skeletal muscle, significantly increased levels between 13.5 dpc and 15.5 dpc with maximal expression observed at 15.5 dpc (PubMed:23233679). Decreased levels in postnatal skeletal muscle (PubMed:23233679). In the mesenchyme of developing limb, highest expression is observed between 13.0 dpc and 15.0 dpc; expression disappears almost completely by 15.5 dpc (PubMed:35962790). In myoblasts, up-regulated soon after induction of myoblast differentiation (PubMed:23233679).</text>
</comment>
<comment type="domain">
    <text evidence="1">The spacer domain and the TSP type-1 domains are important for a tight interaction with the extracellular matrix.</text>
</comment>
<comment type="domain">
    <text>The conserved cysteine present in the cysteine-switch motif binds the catalytic zinc ion, thus inhibiting the enzyme. The dissociation of the cysteine from the zinc ion upon the activation-peptide release activates the enzyme.</text>
</comment>
<comment type="PTM">
    <text evidence="10">The precursor is cleaved by a furin endopeptidase.</text>
</comment>
<comment type="PTM">
    <text evidence="2 10">Glycosylated (PubMed:24220035). Can be O-fucosylated by POFUT2 on a serine or a threonine residue found within the consensus sequence C1-X(2)-(S/T)-C2-G of the TSP type-1 repeat domains where C1 and C2 are the first and second cysteine residue of the repeat, respectively (By similarity). Fucosylated repeats can then be further glycosylated by the addition of a beta-1,3-glucose residue by the glucosyltransferase, B3GALTL (By similarity). Fucosylation mediates the efficient secretion of ADAMTS family members (By similarity). Can be C-glycosylated with one or two mannose molecules on tryptophan residues within the consensus sequence W-X-X-W of the TPRs (By similarity). Also N-glycosylated (PubMed:24220035). These other glycosylations can also facilitate secretion (By similarity).</text>
</comment>
<name>ATS15_MOUSE</name>
<dbReference type="EC" id="3.4.24.-"/>
<dbReference type="EMBL" id="BC009667">
    <property type="protein sequence ID" value="AAH09667.1"/>
    <property type="molecule type" value="mRNA"/>
</dbReference>
<dbReference type="EMBL" id="BC043308">
    <property type="protein sequence ID" value="AAH43308.1"/>
    <property type="molecule type" value="mRNA"/>
</dbReference>
<dbReference type="EMBL" id="BC094677">
    <property type="protein sequence ID" value="AAH94677.1"/>
    <property type="molecule type" value="mRNA"/>
</dbReference>
<dbReference type="CCDS" id="CCDS22945.1"/>
<dbReference type="RefSeq" id="NP_001019310.1">
    <property type="nucleotide sequence ID" value="NM_001024139.2"/>
</dbReference>
<dbReference type="RefSeq" id="NP_001316349.1">
    <property type="nucleotide sequence ID" value="NM_001329420.1"/>
</dbReference>
<dbReference type="SMR" id="P59384"/>
<dbReference type="BioGRID" id="231622">
    <property type="interactions" value="2"/>
</dbReference>
<dbReference type="FunCoup" id="P59384">
    <property type="interactions" value="111"/>
</dbReference>
<dbReference type="STRING" id="10090.ENSMUSP00000067022"/>
<dbReference type="MEROPS" id="M12.025"/>
<dbReference type="GlyCosmos" id="P59384">
    <property type="glycosylation" value="4 sites, No reported glycans"/>
</dbReference>
<dbReference type="GlyGen" id="P59384">
    <property type="glycosylation" value="6 sites, 3 N-linked glycans (3 sites)"/>
</dbReference>
<dbReference type="iPTMnet" id="P59384"/>
<dbReference type="PhosphoSitePlus" id="P59384"/>
<dbReference type="PaxDb" id="10090-ENSMUSP00000067022"/>
<dbReference type="ProteomicsDB" id="277200"/>
<dbReference type="Antibodypedia" id="33110">
    <property type="antibodies" value="136 antibodies from 21 providers"/>
</dbReference>
<dbReference type="DNASU" id="235130"/>
<dbReference type="Ensembl" id="ENSMUST00000065112.7">
    <property type="protein sequence ID" value="ENSMUSP00000067022.7"/>
    <property type="gene ID" value="ENSMUSG00000033453.9"/>
</dbReference>
<dbReference type="GeneID" id="235130"/>
<dbReference type="KEGG" id="mmu:235130"/>
<dbReference type="UCSC" id="uc009oqz.1">
    <property type="organism name" value="mouse"/>
</dbReference>
<dbReference type="AGR" id="MGI:2449569"/>
<dbReference type="CTD" id="170689"/>
<dbReference type="MGI" id="MGI:2449569">
    <property type="gene designation" value="Adamts15"/>
</dbReference>
<dbReference type="VEuPathDB" id="HostDB:ENSMUSG00000033453"/>
<dbReference type="eggNOG" id="KOG3538">
    <property type="taxonomic scope" value="Eukaryota"/>
</dbReference>
<dbReference type="GeneTree" id="ENSGT00940000155801"/>
<dbReference type="HOGENOM" id="CLU_000660_3_0_1"/>
<dbReference type="InParanoid" id="P59384"/>
<dbReference type="OMA" id="LARDRCN"/>
<dbReference type="OrthoDB" id="412680at2759"/>
<dbReference type="PhylomeDB" id="P59384"/>
<dbReference type="TreeFam" id="TF331949"/>
<dbReference type="BRENDA" id="3.4.24.B12">
    <property type="organism ID" value="3474"/>
</dbReference>
<dbReference type="Reactome" id="R-MMU-5173214">
    <property type="pathway name" value="O-glycosylation of TSR domain-containing proteins"/>
</dbReference>
<dbReference type="BioGRID-ORCS" id="235130">
    <property type="hits" value="3 hits in 77 CRISPR screens"/>
</dbReference>
<dbReference type="ChiTaRS" id="Adamts15">
    <property type="organism name" value="mouse"/>
</dbReference>
<dbReference type="PRO" id="PR:P59384"/>
<dbReference type="Proteomes" id="UP000000589">
    <property type="component" value="Chromosome 9"/>
</dbReference>
<dbReference type="RNAct" id="P59384">
    <property type="molecule type" value="protein"/>
</dbReference>
<dbReference type="Bgee" id="ENSMUSG00000033453">
    <property type="expression patterns" value="Expressed in aortic valve and 150 other cell types or tissues"/>
</dbReference>
<dbReference type="ExpressionAtlas" id="P59384">
    <property type="expression patterns" value="baseline and differential"/>
</dbReference>
<dbReference type="GO" id="GO:0009986">
    <property type="term" value="C:cell surface"/>
    <property type="evidence" value="ECO:0000314"/>
    <property type="project" value="MGI"/>
</dbReference>
<dbReference type="GO" id="GO:0005615">
    <property type="term" value="C:extracellular space"/>
    <property type="evidence" value="ECO:0000314"/>
    <property type="project" value="MGI"/>
</dbReference>
<dbReference type="GO" id="GO:0004175">
    <property type="term" value="F:endopeptidase activity"/>
    <property type="evidence" value="ECO:0000314"/>
    <property type="project" value="MGI"/>
</dbReference>
<dbReference type="GO" id="GO:0050840">
    <property type="term" value="F:extracellular matrix binding"/>
    <property type="evidence" value="ECO:0000314"/>
    <property type="project" value="MGI"/>
</dbReference>
<dbReference type="GO" id="GO:0008201">
    <property type="term" value="F:heparin binding"/>
    <property type="evidence" value="ECO:0000314"/>
    <property type="project" value="MGI"/>
</dbReference>
<dbReference type="GO" id="GO:0004222">
    <property type="term" value="F:metalloendopeptidase activity"/>
    <property type="evidence" value="ECO:0007669"/>
    <property type="project" value="InterPro"/>
</dbReference>
<dbReference type="GO" id="GO:0008270">
    <property type="term" value="F:zinc ion binding"/>
    <property type="evidence" value="ECO:0007669"/>
    <property type="project" value="InterPro"/>
</dbReference>
<dbReference type="GO" id="GO:0022617">
    <property type="term" value="P:extracellular matrix disassembly"/>
    <property type="evidence" value="ECO:0000315"/>
    <property type="project" value="UniProtKB"/>
</dbReference>
<dbReference type="GO" id="GO:0007520">
    <property type="term" value="P:myoblast fusion"/>
    <property type="evidence" value="ECO:0000315"/>
    <property type="project" value="UniProtKB"/>
</dbReference>
<dbReference type="GO" id="GO:0006508">
    <property type="term" value="P:proteolysis"/>
    <property type="evidence" value="ECO:0007669"/>
    <property type="project" value="UniProtKB-KW"/>
</dbReference>
<dbReference type="CDD" id="cd04273">
    <property type="entry name" value="ZnMc_ADAMTS_like"/>
    <property type="match status" value="1"/>
</dbReference>
<dbReference type="FunFam" id="2.20.100.10:FF:000006">
    <property type="entry name" value="A disintegrin and metalloproteinase with thrombospondin motifs 1"/>
    <property type="match status" value="1"/>
</dbReference>
<dbReference type="FunFam" id="2.60.120.830:FF:000001">
    <property type="entry name" value="A disintegrin and metalloproteinase with thrombospondin motifs 1"/>
    <property type="match status" value="1"/>
</dbReference>
<dbReference type="FunFam" id="3.40.390.10:FF:000001">
    <property type="entry name" value="A disintegrin and metalloproteinase with thrombospondin motifs 1"/>
    <property type="match status" value="1"/>
</dbReference>
<dbReference type="FunFam" id="2.20.100.10:FF:000005">
    <property type="entry name" value="ADAM metallopeptidase with thrombospondin type 1 motif 9"/>
    <property type="match status" value="1"/>
</dbReference>
<dbReference type="Gene3D" id="2.60.120.830">
    <property type="match status" value="1"/>
</dbReference>
<dbReference type="Gene3D" id="3.40.1620.60">
    <property type="match status" value="1"/>
</dbReference>
<dbReference type="Gene3D" id="3.40.390.10">
    <property type="entry name" value="Collagenase (Catalytic Domain)"/>
    <property type="match status" value="1"/>
</dbReference>
<dbReference type="Gene3D" id="2.20.100.10">
    <property type="entry name" value="Thrombospondin type-1 (TSP1) repeat"/>
    <property type="match status" value="3"/>
</dbReference>
<dbReference type="InterPro" id="IPR006586">
    <property type="entry name" value="ADAM_Cys-rich"/>
</dbReference>
<dbReference type="InterPro" id="IPR013273">
    <property type="entry name" value="ADAMTS/ADAMTS-like"/>
</dbReference>
<dbReference type="InterPro" id="IPR050439">
    <property type="entry name" value="ADAMTS_ADAMTS-like"/>
</dbReference>
<dbReference type="InterPro" id="IPR041645">
    <property type="entry name" value="ADAMTS_CR_2"/>
</dbReference>
<dbReference type="InterPro" id="IPR045371">
    <property type="entry name" value="ADAMTS_CR_3"/>
</dbReference>
<dbReference type="InterPro" id="IPR010294">
    <property type="entry name" value="ADAMTS_spacer1"/>
</dbReference>
<dbReference type="InterPro" id="IPR024079">
    <property type="entry name" value="MetalloPept_cat_dom_sf"/>
</dbReference>
<dbReference type="InterPro" id="IPR013277">
    <property type="entry name" value="Pept_M12B_ADAM-TS8"/>
</dbReference>
<dbReference type="InterPro" id="IPR001590">
    <property type="entry name" value="Peptidase_M12B"/>
</dbReference>
<dbReference type="InterPro" id="IPR002870">
    <property type="entry name" value="Peptidase_M12B_N"/>
</dbReference>
<dbReference type="InterPro" id="IPR000884">
    <property type="entry name" value="TSP1_rpt"/>
</dbReference>
<dbReference type="InterPro" id="IPR036383">
    <property type="entry name" value="TSP1_rpt_sf"/>
</dbReference>
<dbReference type="PANTHER" id="PTHR13723:SF39">
    <property type="entry name" value="A DISINTEGRIN AND METALLOPROTEINASE WITH THROMBOSPONDIN MOTIFS 15"/>
    <property type="match status" value="1"/>
</dbReference>
<dbReference type="PANTHER" id="PTHR13723">
    <property type="entry name" value="ADAMTS A DISINTEGRIN AND METALLOPROTEASE WITH THROMBOSPONDIN MOTIFS PROTEASE"/>
    <property type="match status" value="1"/>
</dbReference>
<dbReference type="Pfam" id="PF17771">
    <property type="entry name" value="ADAMTS_CR_2"/>
    <property type="match status" value="1"/>
</dbReference>
<dbReference type="Pfam" id="PF19236">
    <property type="entry name" value="ADAMTS_CR_3"/>
    <property type="match status" value="1"/>
</dbReference>
<dbReference type="Pfam" id="PF05986">
    <property type="entry name" value="ADAMTS_spacer1"/>
    <property type="match status" value="1"/>
</dbReference>
<dbReference type="Pfam" id="PF01562">
    <property type="entry name" value="Pep_M12B_propep"/>
    <property type="match status" value="1"/>
</dbReference>
<dbReference type="Pfam" id="PF01421">
    <property type="entry name" value="Reprolysin"/>
    <property type="match status" value="1"/>
</dbReference>
<dbReference type="Pfam" id="PF19030">
    <property type="entry name" value="TSP1_ADAMTS"/>
    <property type="match status" value="2"/>
</dbReference>
<dbReference type="Pfam" id="PF00090">
    <property type="entry name" value="TSP_1"/>
    <property type="match status" value="1"/>
</dbReference>
<dbReference type="PRINTS" id="PR01861">
    <property type="entry name" value="ADAMTS8"/>
</dbReference>
<dbReference type="PRINTS" id="PR01857">
    <property type="entry name" value="ADAMTSFAMILY"/>
</dbReference>
<dbReference type="SMART" id="SM00608">
    <property type="entry name" value="ACR"/>
    <property type="match status" value="1"/>
</dbReference>
<dbReference type="SMART" id="SM00209">
    <property type="entry name" value="TSP1"/>
    <property type="match status" value="3"/>
</dbReference>
<dbReference type="SUPFAM" id="SSF55486">
    <property type="entry name" value="Metalloproteases ('zincins'), catalytic domain"/>
    <property type="match status" value="1"/>
</dbReference>
<dbReference type="SUPFAM" id="SSF82895">
    <property type="entry name" value="TSP-1 type 1 repeat"/>
    <property type="match status" value="3"/>
</dbReference>
<dbReference type="PROSITE" id="PS50215">
    <property type="entry name" value="ADAM_MEPRO"/>
    <property type="match status" value="1"/>
</dbReference>
<dbReference type="PROSITE" id="PS50092">
    <property type="entry name" value="TSP1"/>
    <property type="match status" value="3"/>
</dbReference>
<dbReference type="PROSITE" id="PS00142">
    <property type="entry name" value="ZINC_PROTEASE"/>
    <property type="match status" value="1"/>
</dbReference>